<proteinExistence type="inferred from homology"/>
<keyword id="KW-0067">ATP-binding</keyword>
<keyword id="KW-0963">Cytoplasm</keyword>
<keyword id="KW-0418">Kinase</keyword>
<keyword id="KW-0547">Nucleotide-binding</keyword>
<keyword id="KW-0808">Transferase</keyword>
<gene>
    <name evidence="1" type="primary">udk</name>
    <name type="ordered locus">CGSHiGG_03240</name>
</gene>
<name>URK_HAEIG</name>
<accession>A5UFT8</accession>
<sequence length="213" mass="24284">MSNPSCIIIAITGASASGKSSIASTVHKELCNELGCQEIGIITEDSYYKDQSHLEMTERVKTNYDHPNSMDRDLLIQHLKNLKNGSAVDVPVYSYVEHTRTNETTHFTPKRIVILEGILLLTDERVRQLADISVFVDTPLDICFIRRLQRDMEERGRSLQSVIDQYRATVRPMFLQFIEPSKQYADIVIPRGGKNRIAINMLKAQILHLLNQK</sequence>
<feature type="chain" id="PRO_1000017879" description="Uridine kinase">
    <location>
        <begin position="1"/>
        <end position="213"/>
    </location>
</feature>
<feature type="binding site" evidence="1">
    <location>
        <begin position="13"/>
        <end position="20"/>
    </location>
    <ligand>
        <name>ATP</name>
        <dbReference type="ChEBI" id="CHEBI:30616"/>
    </ligand>
</feature>
<dbReference type="EC" id="2.7.1.48" evidence="1"/>
<dbReference type="EMBL" id="CP000672">
    <property type="protein sequence ID" value="ABQ99643.1"/>
    <property type="molecule type" value="Genomic_DNA"/>
</dbReference>
<dbReference type="SMR" id="A5UFT8"/>
<dbReference type="KEGG" id="hiq:CGSHiGG_03240"/>
<dbReference type="HOGENOM" id="CLU_021278_1_2_6"/>
<dbReference type="UniPathway" id="UPA00574">
    <property type="reaction ID" value="UER00637"/>
</dbReference>
<dbReference type="UniPathway" id="UPA00579">
    <property type="reaction ID" value="UER00640"/>
</dbReference>
<dbReference type="Proteomes" id="UP000001990">
    <property type="component" value="Chromosome"/>
</dbReference>
<dbReference type="GO" id="GO:0005737">
    <property type="term" value="C:cytoplasm"/>
    <property type="evidence" value="ECO:0007669"/>
    <property type="project" value="UniProtKB-SubCell"/>
</dbReference>
<dbReference type="GO" id="GO:0005524">
    <property type="term" value="F:ATP binding"/>
    <property type="evidence" value="ECO:0007669"/>
    <property type="project" value="UniProtKB-UniRule"/>
</dbReference>
<dbReference type="GO" id="GO:0043771">
    <property type="term" value="F:cytidine kinase activity"/>
    <property type="evidence" value="ECO:0007669"/>
    <property type="project" value="RHEA"/>
</dbReference>
<dbReference type="GO" id="GO:0004849">
    <property type="term" value="F:uridine kinase activity"/>
    <property type="evidence" value="ECO:0007669"/>
    <property type="project" value="UniProtKB-UniRule"/>
</dbReference>
<dbReference type="GO" id="GO:0044211">
    <property type="term" value="P:CTP salvage"/>
    <property type="evidence" value="ECO:0007669"/>
    <property type="project" value="UniProtKB-UniRule"/>
</dbReference>
<dbReference type="GO" id="GO:0044206">
    <property type="term" value="P:UMP salvage"/>
    <property type="evidence" value="ECO:0007669"/>
    <property type="project" value="UniProtKB-UniRule"/>
</dbReference>
<dbReference type="CDD" id="cd02023">
    <property type="entry name" value="UMPK"/>
    <property type="match status" value="1"/>
</dbReference>
<dbReference type="Gene3D" id="3.40.50.300">
    <property type="entry name" value="P-loop containing nucleotide triphosphate hydrolases"/>
    <property type="match status" value="1"/>
</dbReference>
<dbReference type="HAMAP" id="MF_00551">
    <property type="entry name" value="Uridine_kinase"/>
    <property type="match status" value="1"/>
</dbReference>
<dbReference type="InterPro" id="IPR027417">
    <property type="entry name" value="P-loop_NTPase"/>
</dbReference>
<dbReference type="InterPro" id="IPR006083">
    <property type="entry name" value="PRK/URK"/>
</dbReference>
<dbReference type="InterPro" id="IPR026008">
    <property type="entry name" value="Uridine_kinase"/>
</dbReference>
<dbReference type="InterPro" id="IPR000764">
    <property type="entry name" value="Uridine_kinase-like"/>
</dbReference>
<dbReference type="NCBIfam" id="NF004018">
    <property type="entry name" value="PRK05480.1"/>
    <property type="match status" value="1"/>
</dbReference>
<dbReference type="NCBIfam" id="TIGR00235">
    <property type="entry name" value="udk"/>
    <property type="match status" value="1"/>
</dbReference>
<dbReference type="PANTHER" id="PTHR10285">
    <property type="entry name" value="URIDINE KINASE"/>
    <property type="match status" value="1"/>
</dbReference>
<dbReference type="Pfam" id="PF00485">
    <property type="entry name" value="PRK"/>
    <property type="match status" value="1"/>
</dbReference>
<dbReference type="PRINTS" id="PR00988">
    <property type="entry name" value="URIDINKINASE"/>
</dbReference>
<dbReference type="SUPFAM" id="SSF52540">
    <property type="entry name" value="P-loop containing nucleoside triphosphate hydrolases"/>
    <property type="match status" value="1"/>
</dbReference>
<protein>
    <recommendedName>
        <fullName evidence="1">Uridine kinase</fullName>
        <ecNumber evidence="1">2.7.1.48</ecNumber>
    </recommendedName>
    <alternativeName>
        <fullName evidence="1">Cytidine monophosphokinase</fullName>
    </alternativeName>
    <alternativeName>
        <fullName evidence="1">Uridine monophosphokinase</fullName>
    </alternativeName>
</protein>
<organism>
    <name type="scientific">Haemophilus influenzae (strain PittGG)</name>
    <dbReference type="NCBI Taxonomy" id="374931"/>
    <lineage>
        <taxon>Bacteria</taxon>
        <taxon>Pseudomonadati</taxon>
        <taxon>Pseudomonadota</taxon>
        <taxon>Gammaproteobacteria</taxon>
        <taxon>Pasteurellales</taxon>
        <taxon>Pasteurellaceae</taxon>
        <taxon>Haemophilus</taxon>
    </lineage>
</organism>
<evidence type="ECO:0000255" key="1">
    <source>
        <dbReference type="HAMAP-Rule" id="MF_00551"/>
    </source>
</evidence>
<reference key="1">
    <citation type="journal article" date="2007" name="Genome Biol.">
        <title>Characterization and modeling of the Haemophilus influenzae core and supragenomes based on the complete genomic sequences of Rd and 12 clinical nontypeable strains.</title>
        <authorList>
            <person name="Hogg J.S."/>
            <person name="Hu F.Z."/>
            <person name="Janto B."/>
            <person name="Boissy R."/>
            <person name="Hayes J."/>
            <person name="Keefe R."/>
            <person name="Post J.C."/>
            <person name="Ehrlich G.D."/>
        </authorList>
    </citation>
    <scope>NUCLEOTIDE SEQUENCE [LARGE SCALE GENOMIC DNA]</scope>
    <source>
        <strain>PittGG</strain>
    </source>
</reference>
<comment type="catalytic activity">
    <reaction evidence="1">
        <text>uridine + ATP = UMP + ADP + H(+)</text>
        <dbReference type="Rhea" id="RHEA:16825"/>
        <dbReference type="ChEBI" id="CHEBI:15378"/>
        <dbReference type="ChEBI" id="CHEBI:16704"/>
        <dbReference type="ChEBI" id="CHEBI:30616"/>
        <dbReference type="ChEBI" id="CHEBI:57865"/>
        <dbReference type="ChEBI" id="CHEBI:456216"/>
        <dbReference type="EC" id="2.7.1.48"/>
    </reaction>
</comment>
<comment type="catalytic activity">
    <reaction evidence="1">
        <text>cytidine + ATP = CMP + ADP + H(+)</text>
        <dbReference type="Rhea" id="RHEA:24674"/>
        <dbReference type="ChEBI" id="CHEBI:15378"/>
        <dbReference type="ChEBI" id="CHEBI:17562"/>
        <dbReference type="ChEBI" id="CHEBI:30616"/>
        <dbReference type="ChEBI" id="CHEBI:60377"/>
        <dbReference type="ChEBI" id="CHEBI:456216"/>
        <dbReference type="EC" id="2.7.1.48"/>
    </reaction>
</comment>
<comment type="pathway">
    <text evidence="1">Pyrimidine metabolism; CTP biosynthesis via salvage pathway; CTP from cytidine: step 1/3.</text>
</comment>
<comment type="pathway">
    <text evidence="1">Pyrimidine metabolism; UMP biosynthesis via salvage pathway; UMP from uridine: step 1/1.</text>
</comment>
<comment type="subcellular location">
    <subcellularLocation>
        <location evidence="1">Cytoplasm</location>
    </subcellularLocation>
</comment>
<comment type="similarity">
    <text evidence="1">Belongs to the uridine kinase family.</text>
</comment>